<keyword id="KW-0002">3D-structure</keyword>
<keyword id="KW-1064">Adaptive immunity</keyword>
<keyword id="KW-1015">Disulfide bond</keyword>
<keyword id="KW-0391">Immunity</keyword>
<keyword id="KW-1280">Immunoglobulin</keyword>
<keyword id="KW-1185">Reference proteome</keyword>
<keyword id="KW-0732">Signal</keyword>
<dbReference type="PIR" id="JT0509">
    <property type="entry name" value="HVMS31"/>
</dbReference>
<dbReference type="PDB" id="1EZV">
    <property type="method" value="X-ray"/>
    <property type="resolution" value="2.30 A"/>
    <property type="chains" value="X=20-116"/>
</dbReference>
<dbReference type="PDB" id="2IBZ">
    <property type="method" value="X-ray"/>
    <property type="resolution" value="2.30 A"/>
    <property type="chains" value="X=20-116"/>
</dbReference>
<dbReference type="PDBsum" id="1EZV"/>
<dbReference type="PDBsum" id="2IBZ"/>
<dbReference type="EMDB" id="EMD-29836"/>
<dbReference type="EMDB" id="EMD-8435"/>
<dbReference type="EMDB" id="EMD-8454"/>
<dbReference type="SMR" id="P18531"/>
<dbReference type="FunCoup" id="P18531">
    <property type="interactions" value="640"/>
</dbReference>
<dbReference type="ProteomicsDB" id="266924"/>
<dbReference type="Ensembl" id="ENSMUST00000195124.6">
    <property type="protein sequence ID" value="ENSMUSP00000141343.2"/>
    <property type="gene ID" value="ENSMUSG00000076672.9"/>
</dbReference>
<dbReference type="AGR" id="MGI:4439856"/>
<dbReference type="MGI" id="MGI:4439856">
    <property type="gene designation" value="Ighv3-6"/>
</dbReference>
<dbReference type="VEuPathDB" id="HostDB:ENSMUSG00000076672"/>
<dbReference type="GeneTree" id="ENSGT01030000234536"/>
<dbReference type="InParanoid" id="P18531"/>
<dbReference type="OMA" id="WARYTVK"/>
<dbReference type="OrthoDB" id="9898535at2759"/>
<dbReference type="Reactome" id="R-MMU-166663">
    <property type="pathway name" value="Initial triggering of complement"/>
</dbReference>
<dbReference type="Reactome" id="R-MMU-173623">
    <property type="pathway name" value="Classical antibody-mediated complement activation"/>
</dbReference>
<dbReference type="Reactome" id="R-MMU-198933">
    <property type="pathway name" value="Immunoregulatory interactions between a Lymphoid and a non-Lymphoid cell"/>
</dbReference>
<dbReference type="Reactome" id="R-MMU-202733">
    <property type="pathway name" value="Cell surface interactions at the vascular wall"/>
</dbReference>
<dbReference type="Reactome" id="R-MMU-2029481">
    <property type="pathway name" value="FCGR activation"/>
</dbReference>
<dbReference type="Reactome" id="R-MMU-2029482">
    <property type="pathway name" value="Regulation of actin dynamics for phagocytic cup formation"/>
</dbReference>
<dbReference type="Reactome" id="R-MMU-2029485">
    <property type="pathway name" value="Role of phospholipids in phagocytosis"/>
</dbReference>
<dbReference type="Reactome" id="R-MMU-2168880">
    <property type="pathway name" value="Scavenging of heme from plasma"/>
</dbReference>
<dbReference type="Reactome" id="R-MMU-2454202">
    <property type="pathway name" value="Fc epsilon receptor (FCERI) signaling"/>
</dbReference>
<dbReference type="Reactome" id="R-MMU-2730905">
    <property type="pathway name" value="Role of LAT2/NTAL/LAB on calcium mobilization"/>
</dbReference>
<dbReference type="Reactome" id="R-MMU-2871796">
    <property type="pathway name" value="FCERI mediated MAPK activation"/>
</dbReference>
<dbReference type="Reactome" id="R-MMU-2871809">
    <property type="pathway name" value="FCERI mediated Ca+2 mobilization"/>
</dbReference>
<dbReference type="Reactome" id="R-MMU-2871837">
    <property type="pathway name" value="FCERI mediated NF-kB activation"/>
</dbReference>
<dbReference type="Reactome" id="R-MMU-5690714">
    <property type="pathway name" value="CD22 mediated BCR regulation"/>
</dbReference>
<dbReference type="Reactome" id="R-MMU-977606">
    <property type="pathway name" value="Regulation of Complement cascade"/>
</dbReference>
<dbReference type="Reactome" id="R-MMU-983695">
    <property type="pathway name" value="Antigen activates B Cell Receptor (BCR) leading to generation of second messengers"/>
</dbReference>
<dbReference type="EvolutionaryTrace" id="P18531"/>
<dbReference type="PRO" id="PR:P18531"/>
<dbReference type="Proteomes" id="UP000000589">
    <property type="component" value="Chromosome 12"/>
</dbReference>
<dbReference type="RNAct" id="P18531">
    <property type="molecule type" value="protein"/>
</dbReference>
<dbReference type="Bgee" id="ENSMUSG00000076672">
    <property type="expression patterns" value="Expressed in jejunum and 28 other cell types or tissues"/>
</dbReference>
<dbReference type="ExpressionAtlas" id="P18531">
    <property type="expression patterns" value="baseline and differential"/>
</dbReference>
<dbReference type="GO" id="GO:0005576">
    <property type="term" value="C:extracellular region"/>
    <property type="evidence" value="ECO:0000304"/>
    <property type="project" value="Reactome"/>
</dbReference>
<dbReference type="GO" id="GO:0019814">
    <property type="term" value="C:immunoglobulin complex"/>
    <property type="evidence" value="ECO:0007669"/>
    <property type="project" value="UniProtKB-KW"/>
</dbReference>
<dbReference type="GO" id="GO:0005886">
    <property type="term" value="C:plasma membrane"/>
    <property type="evidence" value="ECO:0000304"/>
    <property type="project" value="Reactome"/>
</dbReference>
<dbReference type="GO" id="GO:0002250">
    <property type="term" value="P:adaptive immune response"/>
    <property type="evidence" value="ECO:0007669"/>
    <property type="project" value="UniProtKB-KW"/>
</dbReference>
<dbReference type="FunFam" id="2.60.40.10:FF:002253">
    <property type="entry name" value="Ig heavy chain V region 36-60"/>
    <property type="match status" value="1"/>
</dbReference>
<dbReference type="Gene3D" id="2.60.40.10">
    <property type="entry name" value="Immunoglobulins"/>
    <property type="match status" value="1"/>
</dbReference>
<dbReference type="InterPro" id="IPR007110">
    <property type="entry name" value="Ig-like_dom"/>
</dbReference>
<dbReference type="InterPro" id="IPR036179">
    <property type="entry name" value="Ig-like_dom_sf"/>
</dbReference>
<dbReference type="InterPro" id="IPR013783">
    <property type="entry name" value="Ig-like_fold"/>
</dbReference>
<dbReference type="InterPro" id="IPR013106">
    <property type="entry name" value="Ig_V-set"/>
</dbReference>
<dbReference type="InterPro" id="IPR050199">
    <property type="entry name" value="IgHV"/>
</dbReference>
<dbReference type="PANTHER" id="PTHR23266">
    <property type="entry name" value="IMMUNOGLOBULIN HEAVY CHAIN"/>
    <property type="match status" value="1"/>
</dbReference>
<dbReference type="Pfam" id="PF07686">
    <property type="entry name" value="V-set"/>
    <property type="match status" value="1"/>
</dbReference>
<dbReference type="SMART" id="SM00406">
    <property type="entry name" value="IGv"/>
    <property type="match status" value="1"/>
</dbReference>
<dbReference type="SUPFAM" id="SSF48726">
    <property type="entry name" value="Immunoglobulin"/>
    <property type="match status" value="1"/>
</dbReference>
<dbReference type="PROSITE" id="PS50835">
    <property type="entry name" value="IG_LIKE"/>
    <property type="match status" value="1"/>
</dbReference>
<feature type="signal peptide">
    <location>
        <begin position="1"/>
        <end position="18"/>
    </location>
</feature>
<feature type="chain" id="PRO_0000015241" description="Ig heavy chain V region 3-6">
    <location>
        <begin position="19"/>
        <end position="116"/>
    </location>
</feature>
<feature type="region of interest" description="Framework-1">
    <location>
        <begin position="19"/>
        <end position="48"/>
    </location>
</feature>
<feature type="region of interest" description="Complementarity-determining-1">
    <location>
        <begin position="49"/>
        <end position="53"/>
    </location>
</feature>
<feature type="region of interest" description="Framework-2">
    <location>
        <begin position="54"/>
        <end position="67"/>
    </location>
</feature>
<feature type="region of interest" description="Complementarity-determining-2">
    <location>
        <begin position="68"/>
        <end position="84"/>
    </location>
</feature>
<feature type="region of interest" description="Framework-3">
    <location>
        <begin position="85"/>
        <end position="116"/>
    </location>
</feature>
<feature type="disulfide bond" evidence="1">
    <location>
        <begin position="40"/>
        <end position="114"/>
    </location>
</feature>
<feature type="non-terminal residue">
    <location>
        <position position="116"/>
    </location>
</feature>
<feature type="strand" evidence="2">
    <location>
        <begin position="21"/>
        <end position="26"/>
    </location>
</feature>
<feature type="strand" evidence="2">
    <location>
        <begin position="28"/>
        <end position="30"/>
    </location>
</feature>
<feature type="strand" evidence="2">
    <location>
        <begin position="36"/>
        <end position="45"/>
    </location>
</feature>
<feature type="turn" evidence="2">
    <location>
        <begin position="47"/>
        <end position="49"/>
    </location>
</feature>
<feature type="strand" evidence="2">
    <location>
        <begin position="50"/>
        <end position="58"/>
    </location>
</feature>
<feature type="strand" evidence="2">
    <location>
        <begin position="64"/>
        <end position="73"/>
    </location>
</feature>
<feature type="strand" evidence="2">
    <location>
        <begin position="76"/>
        <end position="78"/>
    </location>
</feature>
<feature type="turn" evidence="2">
    <location>
        <begin position="80"/>
        <end position="85"/>
    </location>
</feature>
<feature type="strand" evidence="2">
    <location>
        <begin position="89"/>
        <end position="91"/>
    </location>
</feature>
<feature type="turn" evidence="2">
    <location>
        <begin position="92"/>
        <end position="95"/>
    </location>
</feature>
<feature type="strand" evidence="2">
    <location>
        <begin position="96"/>
        <end position="101"/>
    </location>
</feature>
<feature type="helix" evidence="2">
    <location>
        <begin position="106"/>
        <end position="108"/>
    </location>
</feature>
<feature type="strand" evidence="2">
    <location>
        <begin position="110"/>
        <end position="116"/>
    </location>
</feature>
<sequence length="116" mass="13095">MKVLSLLYLLTAIPGILSDVQLQESGPGLVKPSQSLSLTCSVTGYSITSGYYWNWIRQFPGNKLEWMGYISYDGSNNYNPSLKNRISITRDTSKNQFFLKLNSVTTEDTATYYCAR</sequence>
<gene>
    <name type="primary">Ighv3-6</name>
    <name type="synonym">Gm16932</name>
</gene>
<proteinExistence type="evidence at protein level"/>
<evidence type="ECO:0000255" key="1">
    <source>
        <dbReference type="PROSITE-ProRule" id="PRU00114"/>
    </source>
</evidence>
<evidence type="ECO:0007829" key="2">
    <source>
        <dbReference type="PDB" id="1EZV"/>
    </source>
</evidence>
<reference key="1">
    <citation type="journal article" date="1989" name="J. Exp. Med.">
        <title>Early onset of somatic mutation in immunoglobulin VH genes during the primary immune response.</title>
        <authorList>
            <person name="Levy N.S."/>
            <person name="Malipiero U.V."/>
            <person name="Lebecque S.G."/>
            <person name="Gearhart P.J."/>
        </authorList>
    </citation>
    <scope>NUCLEOTIDE SEQUENCE</scope>
    <source>
        <strain>BALB/cJ</strain>
    </source>
</reference>
<accession>P18531</accession>
<organism>
    <name type="scientific">Mus musculus</name>
    <name type="common">Mouse</name>
    <dbReference type="NCBI Taxonomy" id="10090"/>
    <lineage>
        <taxon>Eukaryota</taxon>
        <taxon>Metazoa</taxon>
        <taxon>Chordata</taxon>
        <taxon>Craniata</taxon>
        <taxon>Vertebrata</taxon>
        <taxon>Euteleostomi</taxon>
        <taxon>Mammalia</taxon>
        <taxon>Eutheria</taxon>
        <taxon>Euarchontoglires</taxon>
        <taxon>Glires</taxon>
        <taxon>Rodentia</taxon>
        <taxon>Myomorpha</taxon>
        <taxon>Muroidea</taxon>
        <taxon>Muridae</taxon>
        <taxon>Murinae</taxon>
        <taxon>Mus</taxon>
        <taxon>Mus</taxon>
    </lineage>
</organism>
<protein>
    <recommendedName>
        <fullName>Ig heavy chain V region 3-6</fullName>
    </recommendedName>
    <alternativeName>
        <fullName>Ig heavy chain V region M315</fullName>
    </alternativeName>
</protein>
<name>HVM60_MOUSE</name>